<comment type="function">
    <text evidence="1">Cell wall formation.</text>
</comment>
<comment type="catalytic activity">
    <reaction evidence="1">
        <text>UDP-N-acetyl-alpha-D-muramate + L-alanine + ATP = UDP-N-acetyl-alpha-D-muramoyl-L-alanine + ADP + phosphate + H(+)</text>
        <dbReference type="Rhea" id="RHEA:23372"/>
        <dbReference type="ChEBI" id="CHEBI:15378"/>
        <dbReference type="ChEBI" id="CHEBI:30616"/>
        <dbReference type="ChEBI" id="CHEBI:43474"/>
        <dbReference type="ChEBI" id="CHEBI:57972"/>
        <dbReference type="ChEBI" id="CHEBI:70757"/>
        <dbReference type="ChEBI" id="CHEBI:83898"/>
        <dbReference type="ChEBI" id="CHEBI:456216"/>
        <dbReference type="EC" id="6.3.2.8"/>
    </reaction>
</comment>
<comment type="pathway">
    <text evidence="1">Cell wall biogenesis; peptidoglycan biosynthesis.</text>
</comment>
<comment type="subcellular location">
    <subcellularLocation>
        <location evidence="1">Cytoplasm</location>
    </subcellularLocation>
</comment>
<comment type="similarity">
    <text evidence="1">Belongs to the MurCDEF family.</text>
</comment>
<proteinExistence type="inferred from homology"/>
<accession>Q0AMW8</accession>
<name>MURC_MARMM</name>
<keyword id="KW-0067">ATP-binding</keyword>
<keyword id="KW-0131">Cell cycle</keyword>
<keyword id="KW-0132">Cell division</keyword>
<keyword id="KW-0133">Cell shape</keyword>
<keyword id="KW-0961">Cell wall biogenesis/degradation</keyword>
<keyword id="KW-0963">Cytoplasm</keyword>
<keyword id="KW-0436">Ligase</keyword>
<keyword id="KW-0547">Nucleotide-binding</keyword>
<keyword id="KW-0573">Peptidoglycan synthesis</keyword>
<keyword id="KW-1185">Reference proteome</keyword>
<reference key="1">
    <citation type="submission" date="2006-08" db="EMBL/GenBank/DDBJ databases">
        <title>Complete sequence of Maricaulis maris MCS10.</title>
        <authorList>
            <consortium name="US DOE Joint Genome Institute"/>
            <person name="Copeland A."/>
            <person name="Lucas S."/>
            <person name="Lapidus A."/>
            <person name="Barry K."/>
            <person name="Detter J.C."/>
            <person name="Glavina del Rio T."/>
            <person name="Hammon N."/>
            <person name="Israni S."/>
            <person name="Dalin E."/>
            <person name="Tice H."/>
            <person name="Pitluck S."/>
            <person name="Saunders E."/>
            <person name="Brettin T."/>
            <person name="Bruce D."/>
            <person name="Han C."/>
            <person name="Tapia R."/>
            <person name="Gilna P."/>
            <person name="Schmutz J."/>
            <person name="Larimer F."/>
            <person name="Land M."/>
            <person name="Hauser L."/>
            <person name="Kyrpides N."/>
            <person name="Mikhailova N."/>
            <person name="Viollier P."/>
            <person name="Stephens C."/>
            <person name="Richardson P."/>
        </authorList>
    </citation>
    <scope>NUCLEOTIDE SEQUENCE [LARGE SCALE GENOMIC DNA]</scope>
    <source>
        <strain>MCS10</strain>
    </source>
</reference>
<organism>
    <name type="scientific">Maricaulis maris (strain MCS10)</name>
    <name type="common">Caulobacter maris</name>
    <dbReference type="NCBI Taxonomy" id="394221"/>
    <lineage>
        <taxon>Bacteria</taxon>
        <taxon>Pseudomonadati</taxon>
        <taxon>Pseudomonadota</taxon>
        <taxon>Alphaproteobacteria</taxon>
        <taxon>Maricaulales</taxon>
        <taxon>Maricaulaceae</taxon>
        <taxon>Maricaulis</taxon>
    </lineage>
</organism>
<dbReference type="EC" id="6.3.2.8" evidence="1"/>
<dbReference type="EMBL" id="CP000449">
    <property type="protein sequence ID" value="ABI66369.1"/>
    <property type="molecule type" value="Genomic_DNA"/>
</dbReference>
<dbReference type="RefSeq" id="WP_011644014.1">
    <property type="nucleotide sequence ID" value="NC_008347.1"/>
</dbReference>
<dbReference type="SMR" id="Q0AMW8"/>
<dbReference type="STRING" id="394221.Mmar10_2077"/>
<dbReference type="KEGG" id="mmr:Mmar10_2077"/>
<dbReference type="eggNOG" id="COG0773">
    <property type="taxonomic scope" value="Bacteria"/>
</dbReference>
<dbReference type="HOGENOM" id="CLU_028104_2_2_5"/>
<dbReference type="OrthoDB" id="9804126at2"/>
<dbReference type="UniPathway" id="UPA00219"/>
<dbReference type="Proteomes" id="UP000001964">
    <property type="component" value="Chromosome"/>
</dbReference>
<dbReference type="GO" id="GO:0005737">
    <property type="term" value="C:cytoplasm"/>
    <property type="evidence" value="ECO:0007669"/>
    <property type="project" value="UniProtKB-SubCell"/>
</dbReference>
<dbReference type="GO" id="GO:0005524">
    <property type="term" value="F:ATP binding"/>
    <property type="evidence" value="ECO:0007669"/>
    <property type="project" value="UniProtKB-UniRule"/>
</dbReference>
<dbReference type="GO" id="GO:0008763">
    <property type="term" value="F:UDP-N-acetylmuramate-L-alanine ligase activity"/>
    <property type="evidence" value="ECO:0007669"/>
    <property type="project" value="UniProtKB-UniRule"/>
</dbReference>
<dbReference type="GO" id="GO:0051301">
    <property type="term" value="P:cell division"/>
    <property type="evidence" value="ECO:0007669"/>
    <property type="project" value="UniProtKB-KW"/>
</dbReference>
<dbReference type="GO" id="GO:0071555">
    <property type="term" value="P:cell wall organization"/>
    <property type="evidence" value="ECO:0007669"/>
    <property type="project" value="UniProtKB-KW"/>
</dbReference>
<dbReference type="GO" id="GO:0009252">
    <property type="term" value="P:peptidoglycan biosynthetic process"/>
    <property type="evidence" value="ECO:0007669"/>
    <property type="project" value="UniProtKB-UniRule"/>
</dbReference>
<dbReference type="GO" id="GO:0008360">
    <property type="term" value="P:regulation of cell shape"/>
    <property type="evidence" value="ECO:0007669"/>
    <property type="project" value="UniProtKB-KW"/>
</dbReference>
<dbReference type="Gene3D" id="3.90.190.20">
    <property type="entry name" value="Mur ligase, C-terminal domain"/>
    <property type="match status" value="1"/>
</dbReference>
<dbReference type="Gene3D" id="3.40.1190.10">
    <property type="entry name" value="Mur-like, catalytic domain"/>
    <property type="match status" value="1"/>
</dbReference>
<dbReference type="Gene3D" id="3.40.50.720">
    <property type="entry name" value="NAD(P)-binding Rossmann-like Domain"/>
    <property type="match status" value="1"/>
</dbReference>
<dbReference type="HAMAP" id="MF_00046">
    <property type="entry name" value="MurC"/>
    <property type="match status" value="1"/>
</dbReference>
<dbReference type="InterPro" id="IPR036565">
    <property type="entry name" value="Mur-like_cat_sf"/>
</dbReference>
<dbReference type="InterPro" id="IPR004101">
    <property type="entry name" value="Mur_ligase_C"/>
</dbReference>
<dbReference type="InterPro" id="IPR036615">
    <property type="entry name" value="Mur_ligase_C_dom_sf"/>
</dbReference>
<dbReference type="InterPro" id="IPR013221">
    <property type="entry name" value="Mur_ligase_cen"/>
</dbReference>
<dbReference type="InterPro" id="IPR000713">
    <property type="entry name" value="Mur_ligase_N"/>
</dbReference>
<dbReference type="InterPro" id="IPR050061">
    <property type="entry name" value="MurCDEF_pg_biosynth"/>
</dbReference>
<dbReference type="InterPro" id="IPR005758">
    <property type="entry name" value="UDP-N-AcMur_Ala_ligase_MurC"/>
</dbReference>
<dbReference type="NCBIfam" id="TIGR01082">
    <property type="entry name" value="murC"/>
    <property type="match status" value="1"/>
</dbReference>
<dbReference type="PANTHER" id="PTHR43445:SF3">
    <property type="entry name" value="UDP-N-ACETYLMURAMATE--L-ALANINE LIGASE"/>
    <property type="match status" value="1"/>
</dbReference>
<dbReference type="PANTHER" id="PTHR43445">
    <property type="entry name" value="UDP-N-ACETYLMURAMATE--L-ALANINE LIGASE-RELATED"/>
    <property type="match status" value="1"/>
</dbReference>
<dbReference type="Pfam" id="PF01225">
    <property type="entry name" value="Mur_ligase"/>
    <property type="match status" value="1"/>
</dbReference>
<dbReference type="Pfam" id="PF02875">
    <property type="entry name" value="Mur_ligase_C"/>
    <property type="match status" value="1"/>
</dbReference>
<dbReference type="Pfam" id="PF08245">
    <property type="entry name" value="Mur_ligase_M"/>
    <property type="match status" value="1"/>
</dbReference>
<dbReference type="SUPFAM" id="SSF51984">
    <property type="entry name" value="MurCD N-terminal domain"/>
    <property type="match status" value="1"/>
</dbReference>
<dbReference type="SUPFAM" id="SSF53623">
    <property type="entry name" value="MurD-like peptide ligases, catalytic domain"/>
    <property type="match status" value="1"/>
</dbReference>
<dbReference type="SUPFAM" id="SSF53244">
    <property type="entry name" value="MurD-like peptide ligases, peptide-binding domain"/>
    <property type="match status" value="1"/>
</dbReference>
<feature type="chain" id="PRO_0000336840" description="UDP-N-acetylmuramate--L-alanine ligase">
    <location>
        <begin position="1"/>
        <end position="468"/>
    </location>
</feature>
<feature type="binding site" evidence="1">
    <location>
        <begin position="117"/>
        <end position="123"/>
    </location>
    <ligand>
        <name>ATP</name>
        <dbReference type="ChEBI" id="CHEBI:30616"/>
    </ligand>
</feature>
<sequence length="468" mass="49773">MKFTALPFEVGPVHFVGIGGIGMSGIAEVMLNLGYKVQGSDIKANPNVERLTGLGATVAIGHKAANVDGAGAIVVSSAIKPDNPELVAARAAKIPVVRRAEMLAELMRLKFAVAVGGTHGKTTTTSLVAVLMDAAGVDPTVINGGIISAYGSNAKVGLGDWMAVEADESDGSFLKLRSTVAIVTNIDPEHMEHYGTFDVLRQAFFQFVENLPFYGFAVLCTDHPEVQSLASRVEDRRVITYGQNPQADARLENLKMDPSGATFDVRFRLRGQDETVWRDIFLPMMGEHNVLNAVAALATARELGLTEAGAKTALGQFGGVKRRFTRTGEWKGAAIIDDYGHHPVEIAAVLKAARQAATGKVIAVMQPHRYSRLHDLFDDFSTCFNDADSVLVTPVYTAGEDPIEGADQAHLVESLRSHGHRDAGATTRDAVAADVAKRAGEGDVVVCLGAGDITLWAYALPGELEALG</sequence>
<gene>
    <name evidence="1" type="primary">murC</name>
    <name type="ordered locus">Mmar10_2077</name>
</gene>
<evidence type="ECO:0000255" key="1">
    <source>
        <dbReference type="HAMAP-Rule" id="MF_00046"/>
    </source>
</evidence>
<protein>
    <recommendedName>
        <fullName evidence="1">UDP-N-acetylmuramate--L-alanine ligase</fullName>
        <ecNumber evidence="1">6.3.2.8</ecNumber>
    </recommendedName>
    <alternativeName>
        <fullName evidence="1">UDP-N-acetylmuramoyl-L-alanine synthetase</fullName>
    </alternativeName>
</protein>